<feature type="transit peptide" description="Chloroplast" evidence="1">
    <location>
        <begin position="1"/>
        <end position="46"/>
    </location>
</feature>
<feature type="chain" id="PRO_0000302886" description="Ribulose bisphosphate carboxylase small subunit, chloroplastic" evidence="1">
    <location>
        <begin position="47"/>
        <end position="175"/>
    </location>
</feature>
<feature type="region of interest" description="Interaction with large subunit">
    <location>
        <begin position="60"/>
        <end position="64"/>
    </location>
</feature>
<feature type="sequence conflict" description="In Ref. 2; EAY97115." evidence="2" ref="2">
    <original>R</original>
    <variation>K</variation>
    <location>
        <position position="103"/>
    </location>
</feature>
<accession>A2Y205</accession>
<accession>A6N0Y8</accession>
<accession>O65105</accession>
<accession>P05347</accession>
<accession>P18567</accession>
<accession>Q2QU37</accession>
<proteinExistence type="evidence at transcript level"/>
<name>RBS1_ORYSI</name>
<protein>
    <recommendedName>
        <fullName evidence="1">Ribulose bisphosphate carboxylase small subunit, chloroplastic</fullName>
        <shortName>Ribulose bisphosphate carboxylase small chain C</shortName>
        <shortName evidence="1">RuBisCO small subunit</shortName>
    </recommendedName>
</protein>
<reference key="1">
    <citation type="submission" date="1997-09" db="EMBL/GenBank/DDBJ databases">
        <title>Characterization of ribulose 1,5-bisphosphate carboxylase small subunit from rice.</title>
        <authorList>
            <person name="Lee M.C."/>
            <person name="Kim C.S."/>
            <person name="Eun M.Y."/>
        </authorList>
    </citation>
    <scope>NUCLEOTIDE SEQUENCE [MRNA]</scope>
    <source>
        <strain>cv. Milyang 23</strain>
    </source>
</reference>
<reference key="2">
    <citation type="journal article" date="2005" name="PLoS Biol.">
        <title>The genomes of Oryza sativa: a history of duplications.</title>
        <authorList>
            <person name="Yu J."/>
            <person name="Wang J."/>
            <person name="Lin W."/>
            <person name="Li S."/>
            <person name="Li H."/>
            <person name="Zhou J."/>
            <person name="Ni P."/>
            <person name="Dong W."/>
            <person name="Hu S."/>
            <person name="Zeng C."/>
            <person name="Zhang J."/>
            <person name="Zhang Y."/>
            <person name="Li R."/>
            <person name="Xu Z."/>
            <person name="Li S."/>
            <person name="Li X."/>
            <person name="Zheng H."/>
            <person name="Cong L."/>
            <person name="Lin L."/>
            <person name="Yin J."/>
            <person name="Geng J."/>
            <person name="Li G."/>
            <person name="Shi J."/>
            <person name="Liu J."/>
            <person name="Lv H."/>
            <person name="Li J."/>
            <person name="Wang J."/>
            <person name="Deng Y."/>
            <person name="Ran L."/>
            <person name="Shi X."/>
            <person name="Wang X."/>
            <person name="Wu Q."/>
            <person name="Li C."/>
            <person name="Ren X."/>
            <person name="Wang J."/>
            <person name="Wang X."/>
            <person name="Li D."/>
            <person name="Liu D."/>
            <person name="Zhang X."/>
            <person name="Ji Z."/>
            <person name="Zhao W."/>
            <person name="Sun Y."/>
            <person name="Zhang Z."/>
            <person name="Bao J."/>
            <person name="Han Y."/>
            <person name="Dong L."/>
            <person name="Ji J."/>
            <person name="Chen P."/>
            <person name="Wu S."/>
            <person name="Liu J."/>
            <person name="Xiao Y."/>
            <person name="Bu D."/>
            <person name="Tan J."/>
            <person name="Yang L."/>
            <person name="Ye C."/>
            <person name="Zhang J."/>
            <person name="Xu J."/>
            <person name="Zhou Y."/>
            <person name="Yu Y."/>
            <person name="Zhang B."/>
            <person name="Zhuang S."/>
            <person name="Wei H."/>
            <person name="Liu B."/>
            <person name="Lei M."/>
            <person name="Yu H."/>
            <person name="Li Y."/>
            <person name="Xu H."/>
            <person name="Wei S."/>
            <person name="He X."/>
            <person name="Fang L."/>
            <person name="Zhang Z."/>
            <person name="Zhang Y."/>
            <person name="Huang X."/>
            <person name="Su Z."/>
            <person name="Tong W."/>
            <person name="Li J."/>
            <person name="Tong Z."/>
            <person name="Li S."/>
            <person name="Ye J."/>
            <person name="Wang L."/>
            <person name="Fang L."/>
            <person name="Lei T."/>
            <person name="Chen C.-S."/>
            <person name="Chen H.-C."/>
            <person name="Xu Z."/>
            <person name="Li H."/>
            <person name="Huang H."/>
            <person name="Zhang F."/>
            <person name="Xu H."/>
            <person name="Li N."/>
            <person name="Zhao C."/>
            <person name="Li S."/>
            <person name="Dong L."/>
            <person name="Huang Y."/>
            <person name="Li L."/>
            <person name="Xi Y."/>
            <person name="Qi Q."/>
            <person name="Li W."/>
            <person name="Zhang B."/>
            <person name="Hu W."/>
            <person name="Zhang Y."/>
            <person name="Tian X."/>
            <person name="Jiao Y."/>
            <person name="Liang X."/>
            <person name="Jin J."/>
            <person name="Gao L."/>
            <person name="Zheng W."/>
            <person name="Hao B."/>
            <person name="Liu S.-M."/>
            <person name="Wang W."/>
            <person name="Yuan L."/>
            <person name="Cao M."/>
            <person name="McDermott J."/>
            <person name="Samudrala R."/>
            <person name="Wang J."/>
            <person name="Wong G.K.-S."/>
            <person name="Yang H."/>
        </authorList>
    </citation>
    <scope>NUCLEOTIDE SEQUENCE [LARGE SCALE GENOMIC DNA]</scope>
    <source>
        <strain>cv. 93-11</strain>
    </source>
</reference>
<reference key="3">
    <citation type="submission" date="2007-04" db="EMBL/GenBank/DDBJ databases">
        <title>A comparative transcriptome map of early and late salinity stress responses in contrasting genotypes of Oryza sativa L.</title>
        <authorList>
            <person name="Kumari S."/>
            <person name="Panjabi V."/>
            <person name="Singla-Pareek S.L."/>
            <person name="Sopory S.K."/>
            <person name="Pareek A."/>
        </authorList>
    </citation>
    <scope>NUCLEOTIDE SEQUENCE [LARGE SCALE MRNA]</scope>
    <source>
        <tissue>Shoot</tissue>
    </source>
</reference>
<gene>
    <name evidence="1" type="primary">RBCS</name>
    <name type="synonym">RBCS-C</name>
    <name type="ORF">OsI_018348</name>
</gene>
<dbReference type="EMBL" id="AF017364">
    <property type="protein sequence ID" value="AAB70544.1"/>
    <property type="molecule type" value="mRNA"/>
</dbReference>
<dbReference type="EMBL" id="CM000130">
    <property type="protein sequence ID" value="EAY97115.1"/>
    <property type="molecule type" value="Genomic_DNA"/>
</dbReference>
<dbReference type="EMBL" id="EF576320">
    <property type="protein sequence ID" value="ABR25908.1"/>
    <property type="molecule type" value="mRNA"/>
</dbReference>
<dbReference type="SMR" id="A2Y205"/>
<dbReference type="STRING" id="39946.A2Y205"/>
<dbReference type="EnsemblPlants" id="OsGoSa_12g0009080.02">
    <property type="protein sequence ID" value="OsGoSa_12g0009080.02"/>
    <property type="gene ID" value="OsGoSa_12g0009080"/>
</dbReference>
<dbReference type="EnsemblPlants" id="OsIR64_12g0008940.02">
    <property type="protein sequence ID" value="OsIR64_12g0008940.02"/>
    <property type="gene ID" value="OsIR64_12g0008940"/>
</dbReference>
<dbReference type="EnsemblPlants" id="OsKYG_12g0009120.02">
    <property type="protein sequence ID" value="OsKYG_12g0009120.02"/>
    <property type="gene ID" value="OsKYG_12g0009120"/>
</dbReference>
<dbReference type="EnsemblPlants" id="OsLaMu_12g0009200.01">
    <property type="protein sequence ID" value="OsLaMu_12g0009200.01"/>
    <property type="gene ID" value="OsLaMu_12g0009200"/>
</dbReference>
<dbReference type="EnsemblPlants" id="OsLima_12g0008890.02">
    <property type="protein sequence ID" value="OsLima_12g0008890.02"/>
    <property type="gene ID" value="OsLima_12g0008890"/>
</dbReference>
<dbReference type="EnsemblPlants" id="OsLiXu_12g0009050.01">
    <property type="protein sequence ID" value="OsLiXu_12g0009050.01"/>
    <property type="gene ID" value="OsLiXu_12g0009050"/>
</dbReference>
<dbReference type="EnsemblPlants" id="OsMH63_12G009100_01">
    <property type="protein sequence ID" value="OsMH63_12G009100_01"/>
    <property type="gene ID" value="OsMH63_12G009100"/>
</dbReference>
<dbReference type="EnsemblPlants" id="OsZS97_12G009030_02">
    <property type="protein sequence ID" value="OsZS97_12G009030_02"/>
    <property type="gene ID" value="OsZS97_12G009030"/>
</dbReference>
<dbReference type="Gramene" id="OsGoSa_12g0009080.02">
    <property type="protein sequence ID" value="OsGoSa_12g0009080.02"/>
    <property type="gene ID" value="OsGoSa_12g0009080"/>
</dbReference>
<dbReference type="Gramene" id="OsIR64_12g0008940.02">
    <property type="protein sequence ID" value="OsIR64_12g0008940.02"/>
    <property type="gene ID" value="OsIR64_12g0008940"/>
</dbReference>
<dbReference type="Gramene" id="OsKYG_12g0009120.02">
    <property type="protein sequence ID" value="OsKYG_12g0009120.02"/>
    <property type="gene ID" value="OsKYG_12g0009120"/>
</dbReference>
<dbReference type="Gramene" id="OsLaMu_12g0009200.01">
    <property type="protein sequence ID" value="OsLaMu_12g0009200.01"/>
    <property type="gene ID" value="OsLaMu_12g0009200"/>
</dbReference>
<dbReference type="Gramene" id="OsLima_12g0008890.02">
    <property type="protein sequence ID" value="OsLima_12g0008890.02"/>
    <property type="gene ID" value="OsLima_12g0008890"/>
</dbReference>
<dbReference type="Gramene" id="OsLiXu_12g0009050.01">
    <property type="protein sequence ID" value="OsLiXu_12g0009050.01"/>
    <property type="gene ID" value="OsLiXu_12g0009050"/>
</dbReference>
<dbReference type="Gramene" id="OsMH63_12G009100_01">
    <property type="protein sequence ID" value="OsMH63_12G009100_01"/>
    <property type="gene ID" value="OsMH63_12G009100"/>
</dbReference>
<dbReference type="Gramene" id="OsZS97_12G009030_02">
    <property type="protein sequence ID" value="OsZS97_12G009030_02"/>
    <property type="gene ID" value="OsZS97_12G009030"/>
</dbReference>
<dbReference type="HOGENOM" id="CLU_098114_1_0_1"/>
<dbReference type="OrthoDB" id="730667at2759"/>
<dbReference type="Proteomes" id="UP000007015">
    <property type="component" value="Chromosome 5"/>
</dbReference>
<dbReference type="GO" id="GO:0009507">
    <property type="term" value="C:chloroplast"/>
    <property type="evidence" value="ECO:0007669"/>
    <property type="project" value="UniProtKB-SubCell"/>
</dbReference>
<dbReference type="GO" id="GO:0016984">
    <property type="term" value="F:ribulose-bisphosphate carboxylase activity"/>
    <property type="evidence" value="ECO:0007669"/>
    <property type="project" value="UniProtKB-UniRule"/>
</dbReference>
<dbReference type="GO" id="GO:0009853">
    <property type="term" value="P:photorespiration"/>
    <property type="evidence" value="ECO:0007669"/>
    <property type="project" value="UniProtKB-KW"/>
</dbReference>
<dbReference type="GO" id="GO:0019253">
    <property type="term" value="P:reductive pentose-phosphate cycle"/>
    <property type="evidence" value="ECO:0007669"/>
    <property type="project" value="UniProtKB-UniRule"/>
</dbReference>
<dbReference type="CDD" id="cd03527">
    <property type="entry name" value="RuBisCO_small"/>
    <property type="match status" value="1"/>
</dbReference>
<dbReference type="FunFam" id="3.30.190.10:FF:000001">
    <property type="entry name" value="Ribulose bisphosphate carboxylase small chain, chloroplastic"/>
    <property type="match status" value="1"/>
</dbReference>
<dbReference type="Gene3D" id="3.30.190.10">
    <property type="entry name" value="Ribulose bisphosphate carboxylase, small subunit"/>
    <property type="match status" value="1"/>
</dbReference>
<dbReference type="HAMAP" id="MF_00859">
    <property type="entry name" value="RuBisCO_S_bact"/>
    <property type="match status" value="1"/>
</dbReference>
<dbReference type="InterPro" id="IPR024681">
    <property type="entry name" value="RuBisCO_ssu"/>
</dbReference>
<dbReference type="InterPro" id="IPR000894">
    <property type="entry name" value="RuBisCO_ssu_dom"/>
</dbReference>
<dbReference type="InterPro" id="IPR024680">
    <property type="entry name" value="RuBisCO_ssu_N"/>
</dbReference>
<dbReference type="InterPro" id="IPR036385">
    <property type="entry name" value="RuBisCO_ssu_sf"/>
</dbReference>
<dbReference type="PANTHER" id="PTHR31262">
    <property type="entry name" value="RIBULOSE BISPHOSPHATE CARBOXYLASE SMALL CHAIN 1, CHLOROPLASTIC"/>
    <property type="match status" value="1"/>
</dbReference>
<dbReference type="PANTHER" id="PTHR31262:SF10">
    <property type="entry name" value="RIBULOSE BISPHOSPHATE CARBOXYLASE SMALL SUBUNIT 1A, CHLOROPLASTIC-RELATED"/>
    <property type="match status" value="1"/>
</dbReference>
<dbReference type="Pfam" id="PF12338">
    <property type="entry name" value="RbcS"/>
    <property type="match status" value="1"/>
</dbReference>
<dbReference type="Pfam" id="PF00101">
    <property type="entry name" value="RuBisCO_small"/>
    <property type="match status" value="1"/>
</dbReference>
<dbReference type="PRINTS" id="PR00152">
    <property type="entry name" value="RUBISCOSMALL"/>
</dbReference>
<dbReference type="SMART" id="SM00961">
    <property type="entry name" value="RuBisCO_small"/>
    <property type="match status" value="1"/>
</dbReference>
<dbReference type="SUPFAM" id="SSF55239">
    <property type="entry name" value="RuBisCO, small subunit"/>
    <property type="match status" value="1"/>
</dbReference>
<sequence>MAPSVMASSATTVAPFQGLKSTAGMPVARRSGNSSFGNVSNGGRIRCMQVWPIEGIKKFETLSYLPPLTVEDLLKQIEYLLRSKWVPCLEFSKVGFVYRENHRSPGYYDGRYWTMWKLPMFGCTDATQVLKELEEAKKAYPDAFVRIIGFDNVRQVQLISFIAYKPPGCEESGGN</sequence>
<comment type="function">
    <text evidence="1">RuBisCO catalyzes two reactions: the carboxylation of D-ribulose 1,5-bisphosphate, the primary event in carbon dioxide fixation, as well as the oxidative fragmentation of the pentose substrate. Both reactions occur simultaneously and in competition at the same active site. Although the small subunit is not catalytic it is essential for maximal activity.</text>
</comment>
<comment type="subunit">
    <text evidence="1">Heterohexadecamer of 8 large and 8 small subunits.</text>
</comment>
<comment type="subcellular location">
    <subcellularLocation>
        <location evidence="1">Plastid</location>
        <location evidence="1">Chloroplast</location>
    </subcellularLocation>
</comment>
<comment type="miscellaneous">
    <text evidence="1">The basic functional RuBisCO is composed of a large chain homodimer in a 'head-to-tail' conformation. In form I RuBisCO this homodimer is arranged in a barrel-like tetramer with the small subunits forming a tetrameric 'cap' on each end of the 'barrel'.</text>
</comment>
<comment type="similarity">
    <text evidence="1">Belongs to the RuBisCO small chain family.</text>
</comment>
<keyword id="KW-0113">Calvin cycle</keyword>
<keyword id="KW-0120">Carbon dioxide fixation</keyword>
<keyword id="KW-0150">Chloroplast</keyword>
<keyword id="KW-0601">Photorespiration</keyword>
<keyword id="KW-0602">Photosynthesis</keyword>
<keyword id="KW-0934">Plastid</keyword>
<keyword id="KW-1185">Reference proteome</keyword>
<keyword id="KW-0809">Transit peptide</keyword>
<evidence type="ECO:0000255" key="1">
    <source>
        <dbReference type="HAMAP-Rule" id="MF_00860"/>
    </source>
</evidence>
<evidence type="ECO:0000305" key="2"/>
<organism>
    <name type="scientific">Oryza sativa subsp. indica</name>
    <name type="common">Rice</name>
    <dbReference type="NCBI Taxonomy" id="39946"/>
    <lineage>
        <taxon>Eukaryota</taxon>
        <taxon>Viridiplantae</taxon>
        <taxon>Streptophyta</taxon>
        <taxon>Embryophyta</taxon>
        <taxon>Tracheophyta</taxon>
        <taxon>Spermatophyta</taxon>
        <taxon>Magnoliopsida</taxon>
        <taxon>Liliopsida</taxon>
        <taxon>Poales</taxon>
        <taxon>Poaceae</taxon>
        <taxon>BOP clade</taxon>
        <taxon>Oryzoideae</taxon>
        <taxon>Oryzeae</taxon>
        <taxon>Oryzinae</taxon>
        <taxon>Oryza</taxon>
        <taxon>Oryza sativa</taxon>
    </lineage>
</organism>